<sequence length="295" mass="32320">MTSTINKPLDGEGSVQVKQDPKINIEEGALVIAVYGKGGIGKSTTSSNLSAAFSKLGKKVLQIGCDPKHDSTFTLTHKMVPTVIDILEEVDFHSEELRPTDFMFEGFNGVMCVESGGPPAGTGCGGYVTGQTVKLLKEHHLLEDTDVVIFDVLGDVVCGGFAAPLQHANYCLIVTANDFDSIFAMNRIVSAIKAKAKNYKVRLGGVVANRSKDTDQIDKFNERTGLKTMAHFKDVDAIRRSRLKKCTIFEMEPTEDVIEVQNEYLSLAKNMLENVEPLEGNPLKDREIFDLLGFD</sequence>
<protein>
    <recommendedName>
        <fullName evidence="1">Light-independent protochlorophyllide reductase iron-sulfur ATP-binding protein</fullName>
        <shortName evidence="1">DPOR subunit L</shortName>
        <shortName evidence="1">LI-POR subunit L</shortName>
        <ecNumber evidence="1">1.3.7.7</ecNumber>
    </recommendedName>
</protein>
<name>CHLL_PROM9</name>
<dbReference type="EC" id="1.3.7.7" evidence="1"/>
<dbReference type="EMBL" id="CP000111">
    <property type="protein sequence ID" value="ABB49604.1"/>
    <property type="molecule type" value="Genomic_DNA"/>
</dbReference>
<dbReference type="RefSeq" id="WP_011376102.1">
    <property type="nucleotide sequence ID" value="NC_007577.1"/>
</dbReference>
<dbReference type="SMR" id="Q31BZ1"/>
<dbReference type="STRING" id="74546.PMT9312_0543"/>
<dbReference type="KEGG" id="pmi:PMT9312_0543"/>
<dbReference type="eggNOG" id="COG1348">
    <property type="taxonomic scope" value="Bacteria"/>
</dbReference>
<dbReference type="HOGENOM" id="CLU_059373_2_0_3"/>
<dbReference type="OrthoDB" id="9778641at2"/>
<dbReference type="UniPathway" id="UPA00670"/>
<dbReference type="Proteomes" id="UP000002715">
    <property type="component" value="Chromosome"/>
</dbReference>
<dbReference type="GO" id="GO:0051539">
    <property type="term" value="F:4 iron, 4 sulfur cluster binding"/>
    <property type="evidence" value="ECO:0007669"/>
    <property type="project" value="UniProtKB-UniRule"/>
</dbReference>
<dbReference type="GO" id="GO:0005524">
    <property type="term" value="F:ATP binding"/>
    <property type="evidence" value="ECO:0007669"/>
    <property type="project" value="UniProtKB-UniRule"/>
</dbReference>
<dbReference type="GO" id="GO:0046872">
    <property type="term" value="F:metal ion binding"/>
    <property type="evidence" value="ECO:0007669"/>
    <property type="project" value="UniProtKB-KW"/>
</dbReference>
<dbReference type="GO" id="GO:0016730">
    <property type="term" value="F:oxidoreductase activity, acting on iron-sulfur proteins as donors"/>
    <property type="evidence" value="ECO:0007669"/>
    <property type="project" value="InterPro"/>
</dbReference>
<dbReference type="GO" id="GO:0016636">
    <property type="term" value="F:oxidoreductase activity, acting on the CH-CH group of donors, iron-sulfur protein as acceptor"/>
    <property type="evidence" value="ECO:0007669"/>
    <property type="project" value="UniProtKB-UniRule"/>
</dbReference>
<dbReference type="GO" id="GO:0036068">
    <property type="term" value="P:light-independent chlorophyll biosynthetic process"/>
    <property type="evidence" value="ECO:0007669"/>
    <property type="project" value="UniProtKB-UniRule"/>
</dbReference>
<dbReference type="GO" id="GO:0019685">
    <property type="term" value="P:photosynthesis, dark reaction"/>
    <property type="evidence" value="ECO:0007669"/>
    <property type="project" value="InterPro"/>
</dbReference>
<dbReference type="CDD" id="cd02032">
    <property type="entry name" value="Bchl-like"/>
    <property type="match status" value="1"/>
</dbReference>
<dbReference type="Gene3D" id="3.40.50.300">
    <property type="entry name" value="P-loop containing nucleotide triphosphate hydrolases"/>
    <property type="match status" value="1"/>
</dbReference>
<dbReference type="HAMAP" id="MF_00355">
    <property type="entry name" value="ChlL_BchL"/>
    <property type="match status" value="1"/>
</dbReference>
<dbReference type="InterPro" id="IPR030655">
    <property type="entry name" value="NifH/chlL_CS"/>
</dbReference>
<dbReference type="InterPro" id="IPR000392">
    <property type="entry name" value="NifH/frxC"/>
</dbReference>
<dbReference type="InterPro" id="IPR027417">
    <property type="entry name" value="P-loop_NTPase"/>
</dbReference>
<dbReference type="InterPro" id="IPR005971">
    <property type="entry name" value="Protochlorophyllide_ATP-bd"/>
</dbReference>
<dbReference type="NCBIfam" id="TIGR01281">
    <property type="entry name" value="DPOR_bchL"/>
    <property type="match status" value="1"/>
</dbReference>
<dbReference type="PANTHER" id="PTHR42864">
    <property type="entry name" value="LIGHT-INDEPENDENT PROTOCHLOROPHYLLIDE REDUCTASE IRON-SULFUR ATP-BINDING PROTEIN"/>
    <property type="match status" value="1"/>
</dbReference>
<dbReference type="PANTHER" id="PTHR42864:SF2">
    <property type="entry name" value="LIGHT-INDEPENDENT PROTOCHLOROPHYLLIDE REDUCTASE IRON-SULFUR ATP-BINDING PROTEIN"/>
    <property type="match status" value="1"/>
</dbReference>
<dbReference type="Pfam" id="PF00142">
    <property type="entry name" value="Fer4_NifH"/>
    <property type="match status" value="1"/>
</dbReference>
<dbReference type="PIRSF" id="PIRSF000363">
    <property type="entry name" value="Nitrogenase_iron"/>
    <property type="match status" value="1"/>
</dbReference>
<dbReference type="PRINTS" id="PR00091">
    <property type="entry name" value="NITROGNASEII"/>
</dbReference>
<dbReference type="SUPFAM" id="SSF52540">
    <property type="entry name" value="P-loop containing nucleoside triphosphate hydrolases"/>
    <property type="match status" value="1"/>
</dbReference>
<dbReference type="PROSITE" id="PS00746">
    <property type="entry name" value="NIFH_FRXC_1"/>
    <property type="match status" value="1"/>
</dbReference>
<dbReference type="PROSITE" id="PS00692">
    <property type="entry name" value="NIFH_FRXC_2"/>
    <property type="match status" value="1"/>
</dbReference>
<dbReference type="PROSITE" id="PS51026">
    <property type="entry name" value="NIFH_FRXC_3"/>
    <property type="match status" value="1"/>
</dbReference>
<keyword id="KW-0004">4Fe-4S</keyword>
<keyword id="KW-0067">ATP-binding</keyword>
<keyword id="KW-0149">Chlorophyll biosynthesis</keyword>
<keyword id="KW-0408">Iron</keyword>
<keyword id="KW-0411">Iron-sulfur</keyword>
<keyword id="KW-0460">Magnesium</keyword>
<keyword id="KW-0479">Metal-binding</keyword>
<keyword id="KW-0547">Nucleotide-binding</keyword>
<keyword id="KW-0560">Oxidoreductase</keyword>
<keyword id="KW-0602">Photosynthesis</keyword>
<reference key="1">
    <citation type="journal article" date="2006" name="Science">
        <title>Genomic islands and the ecology and evolution of Prochlorococcus.</title>
        <authorList>
            <person name="Coleman M.L."/>
            <person name="Sullivan M.B."/>
            <person name="Martiny A.C."/>
            <person name="Steglich C."/>
            <person name="Barry K."/>
            <person name="Delong E.F."/>
            <person name="Chisholm S.W."/>
        </authorList>
    </citation>
    <scope>NUCLEOTIDE SEQUENCE [LARGE SCALE GENOMIC DNA]</scope>
    <source>
        <strain>MIT 9312</strain>
    </source>
</reference>
<organism>
    <name type="scientific">Prochlorococcus marinus (strain MIT 9312)</name>
    <dbReference type="NCBI Taxonomy" id="74546"/>
    <lineage>
        <taxon>Bacteria</taxon>
        <taxon>Bacillati</taxon>
        <taxon>Cyanobacteriota</taxon>
        <taxon>Cyanophyceae</taxon>
        <taxon>Synechococcales</taxon>
        <taxon>Prochlorococcaceae</taxon>
        <taxon>Prochlorococcus</taxon>
    </lineage>
</organism>
<proteinExistence type="inferred from homology"/>
<evidence type="ECO:0000255" key="1">
    <source>
        <dbReference type="HAMAP-Rule" id="MF_00355"/>
    </source>
</evidence>
<feature type="chain" id="PRO_0000324062" description="Light-independent protochlorophyllide reductase iron-sulfur ATP-binding protein">
    <location>
        <begin position="1"/>
        <end position="295"/>
    </location>
</feature>
<feature type="binding site" evidence="1">
    <location>
        <begin position="39"/>
        <end position="44"/>
    </location>
    <ligand>
        <name>ATP</name>
        <dbReference type="ChEBI" id="CHEBI:30616"/>
    </ligand>
</feature>
<feature type="binding site" evidence="1">
    <location>
        <position position="43"/>
    </location>
    <ligand>
        <name>Mg(2+)</name>
        <dbReference type="ChEBI" id="CHEBI:18420"/>
    </ligand>
</feature>
<feature type="binding site" evidence="1">
    <location>
        <position position="68"/>
    </location>
    <ligand>
        <name>ATP</name>
        <dbReference type="ChEBI" id="CHEBI:30616"/>
    </ligand>
</feature>
<feature type="binding site" evidence="1">
    <location>
        <position position="124"/>
    </location>
    <ligand>
        <name>[4Fe-4S] cluster</name>
        <dbReference type="ChEBI" id="CHEBI:49883"/>
        <note>ligand shared between dimeric partners</note>
    </ligand>
</feature>
<feature type="binding site" evidence="1">
    <location>
        <position position="158"/>
    </location>
    <ligand>
        <name>[4Fe-4S] cluster</name>
        <dbReference type="ChEBI" id="CHEBI:49883"/>
        <note>ligand shared between dimeric partners</note>
    </ligand>
</feature>
<feature type="binding site" evidence="1">
    <location>
        <begin position="209"/>
        <end position="210"/>
    </location>
    <ligand>
        <name>ATP</name>
        <dbReference type="ChEBI" id="CHEBI:30616"/>
    </ligand>
</feature>
<gene>
    <name evidence="1" type="primary">chlL</name>
    <name type="ordered locus">PMT9312_0543</name>
</gene>
<comment type="function">
    <text evidence="1">Component of the dark-operative protochlorophyllide reductase (DPOR) that uses Mg-ATP and reduced ferredoxin to reduce ring D of protochlorophyllide (Pchlide) to form chlorophyllide a (Chlide). This reaction is light-independent. The L component serves as a unique electron donor to the NB-component of the complex, and binds Mg-ATP.</text>
</comment>
<comment type="catalytic activity">
    <reaction evidence="1">
        <text>chlorophyllide a + oxidized 2[4Fe-4S]-[ferredoxin] + 2 ADP + 2 phosphate = protochlorophyllide a + reduced 2[4Fe-4S]-[ferredoxin] + 2 ATP + 2 H2O</text>
        <dbReference type="Rhea" id="RHEA:28202"/>
        <dbReference type="Rhea" id="RHEA-COMP:10002"/>
        <dbReference type="Rhea" id="RHEA-COMP:10004"/>
        <dbReference type="ChEBI" id="CHEBI:15377"/>
        <dbReference type="ChEBI" id="CHEBI:30616"/>
        <dbReference type="ChEBI" id="CHEBI:33722"/>
        <dbReference type="ChEBI" id="CHEBI:33723"/>
        <dbReference type="ChEBI" id="CHEBI:43474"/>
        <dbReference type="ChEBI" id="CHEBI:83348"/>
        <dbReference type="ChEBI" id="CHEBI:83350"/>
        <dbReference type="ChEBI" id="CHEBI:456216"/>
        <dbReference type="EC" id="1.3.7.7"/>
    </reaction>
</comment>
<comment type="cofactor">
    <cofactor evidence="1">
        <name>[4Fe-4S] cluster</name>
        <dbReference type="ChEBI" id="CHEBI:49883"/>
    </cofactor>
    <text evidence="1">Binds 1 [4Fe-4S] cluster per dimer.</text>
</comment>
<comment type="pathway">
    <text evidence="1">Porphyrin-containing compound metabolism; chlorophyll biosynthesis (light-independent).</text>
</comment>
<comment type="subunit">
    <text evidence="1">Homodimer. Protochlorophyllide reductase is composed of three subunits; ChlL, ChlN and ChlB.</text>
</comment>
<comment type="similarity">
    <text evidence="1">Belongs to the NifH/BchL/ChlL family.</text>
</comment>
<accession>Q31BZ1</accession>